<proteinExistence type="inferred from homology"/>
<evidence type="ECO:0000255" key="1">
    <source>
        <dbReference type="HAMAP-Rule" id="MF_01396"/>
    </source>
</evidence>
<sequence>MSLGVLAAGIAVLSGIGAGVGIGIAAGKAVEAVGRQPEASGRVMTFFILGAALCETTAIYGLVMAFMLMGR</sequence>
<organism>
    <name type="scientific">Clostridium beijerinckii (strain ATCC 51743 / NCIMB 8052)</name>
    <name type="common">Clostridium acetobutylicum</name>
    <dbReference type="NCBI Taxonomy" id="290402"/>
    <lineage>
        <taxon>Bacteria</taxon>
        <taxon>Bacillati</taxon>
        <taxon>Bacillota</taxon>
        <taxon>Clostridia</taxon>
        <taxon>Eubacteriales</taxon>
        <taxon>Clostridiaceae</taxon>
        <taxon>Clostridium</taxon>
    </lineage>
</organism>
<comment type="function">
    <text evidence="1">F(1)F(0) ATP synthase produces ATP from ADP in the presence of a proton or sodium gradient. F-type ATPases consist of two structural domains, F(1) containing the extramembraneous catalytic core and F(0) containing the membrane proton channel, linked together by a central stalk and a peripheral stalk. During catalysis, ATP synthesis in the catalytic domain of F(1) is coupled via a rotary mechanism of the central stalk subunits to proton translocation.</text>
</comment>
<comment type="function">
    <text evidence="1">Key component of the F(0) channel; it plays a direct role in translocation across the membrane. A homomeric c-ring of between 10-14 subunits forms the central stalk rotor element with the F(1) delta and epsilon subunits.</text>
</comment>
<comment type="subunit">
    <text evidence="1">F-type ATPases have 2 components, F(1) - the catalytic core - and F(0) - the membrane proton channel. F(1) has five subunits: alpha(3), beta(3), gamma(1), delta(1), epsilon(1). F(0) has three main subunits: a(1), b(2) and c(10-14). The alpha and beta chains form an alternating ring which encloses part of the gamma chain. F(1) is attached to F(0) by a central stalk formed by the gamma and epsilon chains, while a peripheral stalk is formed by the delta and b chains.</text>
</comment>
<comment type="subcellular location">
    <subcellularLocation>
        <location evidence="1">Cell membrane</location>
        <topology evidence="1">Multi-pass membrane protein</topology>
    </subcellularLocation>
</comment>
<comment type="similarity">
    <text evidence="1">Belongs to the ATPase C chain family.</text>
</comment>
<reference key="1">
    <citation type="submission" date="2007-06" db="EMBL/GenBank/DDBJ databases">
        <title>Complete sequence of Clostridium beijerinckii NCIMB 8052.</title>
        <authorList>
            <consortium name="US DOE Joint Genome Institute"/>
            <person name="Copeland A."/>
            <person name="Lucas S."/>
            <person name="Lapidus A."/>
            <person name="Barry K."/>
            <person name="Detter J.C."/>
            <person name="Glavina del Rio T."/>
            <person name="Hammon N."/>
            <person name="Israni S."/>
            <person name="Dalin E."/>
            <person name="Tice H."/>
            <person name="Pitluck S."/>
            <person name="Sims D."/>
            <person name="Brettin T."/>
            <person name="Bruce D."/>
            <person name="Tapia R."/>
            <person name="Brainard J."/>
            <person name="Schmutz J."/>
            <person name="Larimer F."/>
            <person name="Land M."/>
            <person name="Hauser L."/>
            <person name="Kyrpides N."/>
            <person name="Mikhailova N."/>
            <person name="Bennet G."/>
            <person name="Cann I."/>
            <person name="Chen J.-S."/>
            <person name="Contreras A.L."/>
            <person name="Jones D."/>
            <person name="Kashket E."/>
            <person name="Mitchell W."/>
            <person name="Stoddard S."/>
            <person name="Schwarz W."/>
            <person name="Qureshi N."/>
            <person name="Young M."/>
            <person name="Shi Z."/>
            <person name="Ezeji T."/>
            <person name="White B."/>
            <person name="Blaschek H."/>
            <person name="Richardson P."/>
        </authorList>
    </citation>
    <scope>NUCLEOTIDE SEQUENCE [LARGE SCALE GENOMIC DNA]</scope>
    <source>
        <strain>ATCC 51743 / NCIMB 8052</strain>
    </source>
</reference>
<accession>A6LQH1</accession>
<gene>
    <name evidence="1" type="primary">atpE</name>
    <name type="ordered locus">Cbei_0413</name>
</gene>
<protein>
    <recommendedName>
        <fullName evidence="1">ATP synthase subunit c</fullName>
    </recommendedName>
    <alternativeName>
        <fullName evidence="1">ATP synthase F(0) sector subunit c</fullName>
    </alternativeName>
    <alternativeName>
        <fullName evidence="1">F-type ATPase subunit c</fullName>
        <shortName evidence="1">F-ATPase subunit c</shortName>
    </alternativeName>
    <alternativeName>
        <fullName evidence="1">Lipid-binding protein</fullName>
    </alternativeName>
</protein>
<keyword id="KW-0066">ATP synthesis</keyword>
<keyword id="KW-1003">Cell membrane</keyword>
<keyword id="KW-0138">CF(0)</keyword>
<keyword id="KW-0375">Hydrogen ion transport</keyword>
<keyword id="KW-0406">Ion transport</keyword>
<keyword id="KW-0446">Lipid-binding</keyword>
<keyword id="KW-0472">Membrane</keyword>
<keyword id="KW-0812">Transmembrane</keyword>
<keyword id="KW-1133">Transmembrane helix</keyword>
<keyword id="KW-0813">Transport</keyword>
<dbReference type="EMBL" id="CP000721">
    <property type="protein sequence ID" value="ABR32601.1"/>
    <property type="molecule type" value="Genomic_DNA"/>
</dbReference>
<dbReference type="RefSeq" id="WP_011967762.1">
    <property type="nucleotide sequence ID" value="NC_009617.1"/>
</dbReference>
<dbReference type="SMR" id="A6LQH1"/>
<dbReference type="KEGG" id="cbe:Cbei_0413"/>
<dbReference type="eggNOG" id="COG0636">
    <property type="taxonomic scope" value="Bacteria"/>
</dbReference>
<dbReference type="HOGENOM" id="CLU_148047_2_1_9"/>
<dbReference type="Proteomes" id="UP000000565">
    <property type="component" value="Chromosome"/>
</dbReference>
<dbReference type="GO" id="GO:0005886">
    <property type="term" value="C:plasma membrane"/>
    <property type="evidence" value="ECO:0007669"/>
    <property type="project" value="UniProtKB-SubCell"/>
</dbReference>
<dbReference type="GO" id="GO:0045259">
    <property type="term" value="C:proton-transporting ATP synthase complex"/>
    <property type="evidence" value="ECO:0007669"/>
    <property type="project" value="UniProtKB-KW"/>
</dbReference>
<dbReference type="GO" id="GO:0033177">
    <property type="term" value="C:proton-transporting two-sector ATPase complex, proton-transporting domain"/>
    <property type="evidence" value="ECO:0007669"/>
    <property type="project" value="InterPro"/>
</dbReference>
<dbReference type="GO" id="GO:0008289">
    <property type="term" value="F:lipid binding"/>
    <property type="evidence" value="ECO:0007669"/>
    <property type="project" value="UniProtKB-KW"/>
</dbReference>
<dbReference type="GO" id="GO:0046933">
    <property type="term" value="F:proton-transporting ATP synthase activity, rotational mechanism"/>
    <property type="evidence" value="ECO:0007669"/>
    <property type="project" value="UniProtKB-UniRule"/>
</dbReference>
<dbReference type="FunFam" id="1.20.20.10:FF:000002">
    <property type="entry name" value="ATP synthase subunit c"/>
    <property type="match status" value="1"/>
</dbReference>
<dbReference type="Gene3D" id="1.20.20.10">
    <property type="entry name" value="F1F0 ATP synthase subunit C"/>
    <property type="match status" value="1"/>
</dbReference>
<dbReference type="HAMAP" id="MF_01396">
    <property type="entry name" value="ATP_synth_c_bact"/>
    <property type="match status" value="1"/>
</dbReference>
<dbReference type="InterPro" id="IPR005953">
    <property type="entry name" value="ATP_synth_csu_bac/chlpt"/>
</dbReference>
<dbReference type="InterPro" id="IPR000454">
    <property type="entry name" value="ATP_synth_F0_csu"/>
</dbReference>
<dbReference type="InterPro" id="IPR020537">
    <property type="entry name" value="ATP_synth_F0_csu_DDCD_BS"/>
</dbReference>
<dbReference type="InterPro" id="IPR038662">
    <property type="entry name" value="ATP_synth_F0_csu_sf"/>
</dbReference>
<dbReference type="InterPro" id="IPR002379">
    <property type="entry name" value="ATPase_proteolipid_c-like_dom"/>
</dbReference>
<dbReference type="InterPro" id="IPR035921">
    <property type="entry name" value="F/V-ATP_Csub_sf"/>
</dbReference>
<dbReference type="NCBIfam" id="TIGR01260">
    <property type="entry name" value="ATP_synt_c"/>
    <property type="match status" value="1"/>
</dbReference>
<dbReference type="Pfam" id="PF00137">
    <property type="entry name" value="ATP-synt_C"/>
    <property type="match status" value="1"/>
</dbReference>
<dbReference type="PRINTS" id="PR00124">
    <property type="entry name" value="ATPASEC"/>
</dbReference>
<dbReference type="SUPFAM" id="SSF81333">
    <property type="entry name" value="F1F0 ATP synthase subunit C"/>
    <property type="match status" value="1"/>
</dbReference>
<dbReference type="PROSITE" id="PS00605">
    <property type="entry name" value="ATPASE_C"/>
    <property type="match status" value="1"/>
</dbReference>
<feature type="chain" id="PRO_1000184351" description="ATP synthase subunit c">
    <location>
        <begin position="1"/>
        <end position="71"/>
    </location>
</feature>
<feature type="transmembrane region" description="Helical" evidence="1">
    <location>
        <begin position="5"/>
        <end position="25"/>
    </location>
</feature>
<feature type="transmembrane region" description="Helical" evidence="1">
    <location>
        <begin position="46"/>
        <end position="66"/>
    </location>
</feature>
<feature type="site" description="Reversibly protonated during proton transport" evidence="1">
    <location>
        <position position="55"/>
    </location>
</feature>
<name>ATPL_CLOB8</name>